<dbReference type="EMBL" id="AF401573">
    <property type="protein sequence ID" value="AAK95145.1"/>
    <property type="molecule type" value="mRNA"/>
</dbReference>
<dbReference type="RefSeq" id="NP_001187046.1">
    <property type="nucleotide sequence ID" value="NM_001200117.1"/>
</dbReference>
<dbReference type="SMR" id="Q90YU9"/>
<dbReference type="STRING" id="7998.ENSIPUP00000022430"/>
<dbReference type="GeneID" id="100304534"/>
<dbReference type="KEGG" id="ipu:100304534"/>
<dbReference type="CTD" id="6142"/>
<dbReference type="OMA" id="CIFAKND"/>
<dbReference type="OrthoDB" id="1294322at2759"/>
<dbReference type="Proteomes" id="UP000221080">
    <property type="component" value="Chromosome 14"/>
</dbReference>
<dbReference type="GO" id="GO:0005737">
    <property type="term" value="C:cytoplasm"/>
    <property type="evidence" value="ECO:0007669"/>
    <property type="project" value="UniProtKB-SubCell"/>
</dbReference>
<dbReference type="GO" id="GO:1990904">
    <property type="term" value="C:ribonucleoprotein complex"/>
    <property type="evidence" value="ECO:0007669"/>
    <property type="project" value="UniProtKB-KW"/>
</dbReference>
<dbReference type="GO" id="GO:0005840">
    <property type="term" value="C:ribosome"/>
    <property type="evidence" value="ECO:0007669"/>
    <property type="project" value="UniProtKB-KW"/>
</dbReference>
<dbReference type="GO" id="GO:0003735">
    <property type="term" value="F:structural constituent of ribosome"/>
    <property type="evidence" value="ECO:0007669"/>
    <property type="project" value="InterPro"/>
</dbReference>
<dbReference type="GO" id="GO:0006412">
    <property type="term" value="P:translation"/>
    <property type="evidence" value="ECO:0007669"/>
    <property type="project" value="InterPro"/>
</dbReference>
<dbReference type="FunFam" id="3.10.20.10:FF:000001">
    <property type="entry name" value="60S ribosomal protein L18a"/>
    <property type="match status" value="1"/>
</dbReference>
<dbReference type="FunFam" id="3.10.20.10:FF:000002">
    <property type="entry name" value="60S ribosomal protein L18a"/>
    <property type="match status" value="1"/>
</dbReference>
<dbReference type="Gene3D" id="3.10.20.10">
    <property type="match status" value="2"/>
</dbReference>
<dbReference type="HAMAP" id="MF_00273">
    <property type="entry name" value="Ribosomal_eL20"/>
    <property type="match status" value="1"/>
</dbReference>
<dbReference type="InterPro" id="IPR028877">
    <property type="entry name" value="Ribosomal_eL20"/>
</dbReference>
<dbReference type="InterPro" id="IPR023573">
    <property type="entry name" value="Ribosomal_eL20_dom"/>
</dbReference>
<dbReference type="InterPro" id="IPR021138">
    <property type="entry name" value="Ribosomal_eL20_eukaryotes"/>
</dbReference>
<dbReference type="PANTHER" id="PTHR10052">
    <property type="entry name" value="60S RIBOSOMAL PROTEIN L18A"/>
    <property type="match status" value="1"/>
</dbReference>
<dbReference type="Pfam" id="PF01775">
    <property type="entry name" value="Ribosomal_L18A"/>
    <property type="match status" value="1"/>
</dbReference>
<dbReference type="PIRSF" id="PIRSF002190">
    <property type="entry name" value="Ribosomal_L18a"/>
    <property type="match status" value="1"/>
</dbReference>
<dbReference type="SUPFAM" id="SSF160374">
    <property type="entry name" value="RplX-like"/>
    <property type="match status" value="1"/>
</dbReference>
<feature type="chain" id="PRO_0000213929" description="Large ribosomal subunit protein eL20">
    <location>
        <begin position="1"/>
        <end position="176"/>
    </location>
</feature>
<protein>
    <recommendedName>
        <fullName evidence="2">Large ribosomal subunit protein eL20</fullName>
    </recommendedName>
    <alternativeName>
        <fullName>60S ribosomal protein L18a</fullName>
    </alternativeName>
</protein>
<sequence length="176" mass="20703">MKASGTLREYKVVGRLLPSAKNPTPPLYRMRIFAPNHVVAKSRFWYFVSQLRKMKKANGETVYCGLVHEQSPLKVKNFGIWLRYDSRSGTHNMYREYRDLTTSGAVTQCYRDMGARHRARAHAIQIMKVQVIAANKCRRAAIKQFHDSKIKFPLPHRVLRRQHKPRFTTRRPQTFF</sequence>
<reference key="1">
    <citation type="journal article" date="2003" name="Gene">
        <title>Translational machinery of channel catfish: II. Complementary DNA and expression of the complete set of 47 60S ribosomal proteins.</title>
        <authorList>
            <person name="Patterson A.P."/>
            <person name="Karsi A."/>
            <person name="Feng J."/>
            <person name="Liu Z.J."/>
        </authorList>
    </citation>
    <scope>NUCLEOTIDE SEQUENCE [MRNA]</scope>
</reference>
<gene>
    <name type="primary">rpl18a</name>
</gene>
<name>RL18A_ICTPU</name>
<evidence type="ECO:0000250" key="1">
    <source>
        <dbReference type="UniProtKB" id="Q02543"/>
    </source>
</evidence>
<evidence type="ECO:0000305" key="2"/>
<proteinExistence type="evidence at transcript level"/>
<comment type="function">
    <text evidence="1">Component of the large ribosomal subunit. The ribosome is a large ribonucleoprotein complex responsible for the synthesis of proteins in the cell.</text>
</comment>
<comment type="subunit">
    <text evidence="1">Component of the large ribosomal subunit.</text>
</comment>
<comment type="subcellular location">
    <subcellularLocation>
        <location evidence="1">Cytoplasm</location>
    </subcellularLocation>
</comment>
<comment type="similarity">
    <text evidence="2">Belongs to the eukaryotic ribosomal protein eL20 family.</text>
</comment>
<organism>
    <name type="scientific">Ictalurus punctatus</name>
    <name type="common">Channel catfish</name>
    <name type="synonym">Silurus punctatus</name>
    <dbReference type="NCBI Taxonomy" id="7998"/>
    <lineage>
        <taxon>Eukaryota</taxon>
        <taxon>Metazoa</taxon>
        <taxon>Chordata</taxon>
        <taxon>Craniata</taxon>
        <taxon>Vertebrata</taxon>
        <taxon>Euteleostomi</taxon>
        <taxon>Actinopterygii</taxon>
        <taxon>Neopterygii</taxon>
        <taxon>Teleostei</taxon>
        <taxon>Ostariophysi</taxon>
        <taxon>Siluriformes</taxon>
        <taxon>Ictaluridae</taxon>
        <taxon>Ictalurus</taxon>
    </lineage>
</organism>
<keyword id="KW-0963">Cytoplasm</keyword>
<keyword id="KW-0687">Ribonucleoprotein</keyword>
<keyword id="KW-0689">Ribosomal protein</keyword>
<accession>Q90YU9</accession>